<organism>
    <name type="scientific">Homo sapiens</name>
    <name type="common">Human</name>
    <dbReference type="NCBI Taxonomy" id="9606"/>
    <lineage>
        <taxon>Eukaryota</taxon>
        <taxon>Metazoa</taxon>
        <taxon>Chordata</taxon>
        <taxon>Craniata</taxon>
        <taxon>Vertebrata</taxon>
        <taxon>Euteleostomi</taxon>
        <taxon>Mammalia</taxon>
        <taxon>Eutheria</taxon>
        <taxon>Euarchontoglires</taxon>
        <taxon>Primates</taxon>
        <taxon>Haplorrhini</taxon>
        <taxon>Catarrhini</taxon>
        <taxon>Hominidae</taxon>
        <taxon>Homo</taxon>
    </lineage>
</organism>
<proteinExistence type="evidence at protein level"/>
<comment type="function">
    <text evidence="5 7">Vesicular soluble NSF attachment protein receptor (v-SNARE) mediating vesicle docking and fusion to a specific acceptor cellular compartment. Functions in endoplasmic reticulum to Golgi transport; as part of a SNARE complex composed of GOSR1, GOSR2 and STX5. Functions in early/recycling endosome to TGN transport; as part of a SNARE complex composed of BET1L, GOSR1 and STX5. Has a S-palmitoyl transferase activity.</text>
</comment>
<comment type="subunit">
    <text evidence="1">Identified in 2 different SNARE complexes; the first one composed of GOSR1, GOSR2 and STX5 and the second one composed of BET1L, GOSR1 and STX5.</text>
</comment>
<comment type="interaction">
    <interactant intactId="EBI-4402903">
        <id>O15498</id>
    </interactant>
    <interactant intactId="EBI-3221827">
        <id>O15400</id>
        <label>STX7</label>
    </interactant>
    <organismsDiffer>false</organismsDiffer>
    <experiments>4</experiments>
</comment>
<comment type="subcellular location">
    <subcellularLocation>
        <location>Cytoplasm</location>
        <location>Cytosol</location>
    </subcellularLocation>
    <subcellularLocation>
        <location>Cytoplasmic vesicle membrane</location>
        <topology>Lipid-anchor</topology>
        <orientation>Cytoplasmic side</orientation>
    </subcellularLocation>
    <subcellularLocation>
        <location>Golgi apparatus membrane</location>
        <topology>Lipid-anchor</topology>
        <orientation>Cytoplasmic side</orientation>
    </subcellularLocation>
    <text>Probably cycles through vesicles between Golgi and endosomes.</text>
</comment>
<comment type="alternative products">
    <event type="alternative splicing"/>
    <isoform>
        <id>O15498-1</id>
        <name>1</name>
        <sequence type="displayed"/>
    </isoform>
    <isoform>
        <id>O15498-2</id>
        <name>2</name>
        <sequence type="described" ref="VSP_056071"/>
    </isoform>
</comment>
<comment type="domain">
    <text>The longin domain regulates palmitoylation and membrane targeting.</text>
</comment>
<comment type="PTM">
    <text evidence="4 6">Palmitoylated; catalyzes its own palmitoylation. Palmitoylation is required for Golgi targeting.</text>
</comment>
<comment type="PTM">
    <text>Farnesylation is required for Golgi targeting.</text>
</comment>
<comment type="similarity">
    <text evidence="9">Belongs to the synaptobrevin family.</text>
</comment>
<reference key="1">
    <citation type="journal article" date="1997" name="J. Biol. Chem.">
        <title>Ykt6p, a prenylated SNARE essential for endoplasmic reticulum-Golgi transport.</title>
        <authorList>
            <person name="McNew J.A."/>
            <person name="Soegaard M."/>
            <person name="Lampen N.M."/>
            <person name="Machida S."/>
            <person name="Ye R.R."/>
            <person name="Lacomis L."/>
            <person name="Tempst P."/>
            <person name="Rothman J.E."/>
            <person name="Soellner T.H."/>
        </authorList>
    </citation>
    <scope>NUCLEOTIDE SEQUENCE [MRNA] (ISOFORM 1)</scope>
    <scope>FUNCTION</scope>
    <source>
        <tissue>Pancreas</tissue>
    </source>
</reference>
<reference key="2">
    <citation type="submission" date="2003-05" db="EMBL/GenBank/DDBJ databases">
        <title>Cloning of human full-length CDSs in BD Creator(TM) system donor vector.</title>
        <authorList>
            <person name="Kalnine N."/>
            <person name="Chen X."/>
            <person name="Rolfs A."/>
            <person name="Halleck A."/>
            <person name="Hines L."/>
            <person name="Eisenstein S."/>
            <person name="Koundinya M."/>
            <person name="Raphael J."/>
            <person name="Moreira D."/>
            <person name="Kelley T."/>
            <person name="LaBaer J."/>
            <person name="Lin Y."/>
            <person name="Phelan M."/>
            <person name="Farmer A."/>
        </authorList>
    </citation>
    <scope>NUCLEOTIDE SEQUENCE [LARGE SCALE MRNA] (ISOFORM 1)</scope>
</reference>
<reference key="3">
    <citation type="journal article" date="2004" name="Nat. Genet.">
        <title>Complete sequencing and characterization of 21,243 full-length human cDNAs.</title>
        <authorList>
            <person name="Ota T."/>
            <person name="Suzuki Y."/>
            <person name="Nishikawa T."/>
            <person name="Otsuki T."/>
            <person name="Sugiyama T."/>
            <person name="Irie R."/>
            <person name="Wakamatsu A."/>
            <person name="Hayashi K."/>
            <person name="Sato H."/>
            <person name="Nagai K."/>
            <person name="Kimura K."/>
            <person name="Makita H."/>
            <person name="Sekine M."/>
            <person name="Obayashi M."/>
            <person name="Nishi T."/>
            <person name="Shibahara T."/>
            <person name="Tanaka T."/>
            <person name="Ishii S."/>
            <person name="Yamamoto J."/>
            <person name="Saito K."/>
            <person name="Kawai Y."/>
            <person name="Isono Y."/>
            <person name="Nakamura Y."/>
            <person name="Nagahari K."/>
            <person name="Murakami K."/>
            <person name="Yasuda T."/>
            <person name="Iwayanagi T."/>
            <person name="Wagatsuma M."/>
            <person name="Shiratori A."/>
            <person name="Sudo H."/>
            <person name="Hosoiri T."/>
            <person name="Kaku Y."/>
            <person name="Kodaira H."/>
            <person name="Kondo H."/>
            <person name="Sugawara M."/>
            <person name="Takahashi M."/>
            <person name="Kanda K."/>
            <person name="Yokoi T."/>
            <person name="Furuya T."/>
            <person name="Kikkawa E."/>
            <person name="Omura Y."/>
            <person name="Abe K."/>
            <person name="Kamihara K."/>
            <person name="Katsuta N."/>
            <person name="Sato K."/>
            <person name="Tanikawa M."/>
            <person name="Yamazaki M."/>
            <person name="Ninomiya K."/>
            <person name="Ishibashi T."/>
            <person name="Yamashita H."/>
            <person name="Murakawa K."/>
            <person name="Fujimori K."/>
            <person name="Tanai H."/>
            <person name="Kimata M."/>
            <person name="Watanabe M."/>
            <person name="Hiraoka S."/>
            <person name="Chiba Y."/>
            <person name="Ishida S."/>
            <person name="Ono Y."/>
            <person name="Takiguchi S."/>
            <person name="Watanabe S."/>
            <person name="Yosida M."/>
            <person name="Hotuta T."/>
            <person name="Kusano J."/>
            <person name="Kanehori K."/>
            <person name="Takahashi-Fujii A."/>
            <person name="Hara H."/>
            <person name="Tanase T.-O."/>
            <person name="Nomura Y."/>
            <person name="Togiya S."/>
            <person name="Komai F."/>
            <person name="Hara R."/>
            <person name="Takeuchi K."/>
            <person name="Arita M."/>
            <person name="Imose N."/>
            <person name="Musashino K."/>
            <person name="Yuuki H."/>
            <person name="Oshima A."/>
            <person name="Sasaki N."/>
            <person name="Aotsuka S."/>
            <person name="Yoshikawa Y."/>
            <person name="Matsunawa H."/>
            <person name="Ichihara T."/>
            <person name="Shiohata N."/>
            <person name="Sano S."/>
            <person name="Moriya S."/>
            <person name="Momiyama H."/>
            <person name="Satoh N."/>
            <person name="Takami S."/>
            <person name="Terashima Y."/>
            <person name="Suzuki O."/>
            <person name="Nakagawa S."/>
            <person name="Senoh A."/>
            <person name="Mizoguchi H."/>
            <person name="Goto Y."/>
            <person name="Shimizu F."/>
            <person name="Wakebe H."/>
            <person name="Hishigaki H."/>
            <person name="Watanabe T."/>
            <person name="Sugiyama A."/>
            <person name="Takemoto M."/>
            <person name="Kawakami B."/>
            <person name="Yamazaki M."/>
            <person name="Watanabe K."/>
            <person name="Kumagai A."/>
            <person name="Itakura S."/>
            <person name="Fukuzumi Y."/>
            <person name="Fujimori Y."/>
            <person name="Komiyama M."/>
            <person name="Tashiro H."/>
            <person name="Tanigami A."/>
            <person name="Fujiwara T."/>
            <person name="Ono T."/>
            <person name="Yamada K."/>
            <person name="Fujii Y."/>
            <person name="Ozaki K."/>
            <person name="Hirao M."/>
            <person name="Ohmori Y."/>
            <person name="Kawabata A."/>
            <person name="Hikiji T."/>
            <person name="Kobatake N."/>
            <person name="Inagaki H."/>
            <person name="Ikema Y."/>
            <person name="Okamoto S."/>
            <person name="Okitani R."/>
            <person name="Kawakami T."/>
            <person name="Noguchi S."/>
            <person name="Itoh T."/>
            <person name="Shigeta K."/>
            <person name="Senba T."/>
            <person name="Matsumura K."/>
            <person name="Nakajima Y."/>
            <person name="Mizuno T."/>
            <person name="Morinaga M."/>
            <person name="Sasaki M."/>
            <person name="Togashi T."/>
            <person name="Oyama M."/>
            <person name="Hata H."/>
            <person name="Watanabe M."/>
            <person name="Komatsu T."/>
            <person name="Mizushima-Sugano J."/>
            <person name="Satoh T."/>
            <person name="Shirai Y."/>
            <person name="Takahashi Y."/>
            <person name="Nakagawa K."/>
            <person name="Okumura K."/>
            <person name="Nagase T."/>
            <person name="Nomura N."/>
            <person name="Kikuchi H."/>
            <person name="Masuho Y."/>
            <person name="Yamashita R."/>
            <person name="Nakai K."/>
            <person name="Yada T."/>
            <person name="Nakamura Y."/>
            <person name="Ohara O."/>
            <person name="Isogai T."/>
            <person name="Sugano S."/>
        </authorList>
    </citation>
    <scope>NUCLEOTIDE SEQUENCE [LARGE SCALE MRNA] (ISOFORM 2)</scope>
</reference>
<reference key="4">
    <citation type="submission" date="2004-06" db="EMBL/GenBank/DDBJ databases">
        <title>Cloning of human full open reading frames in Gateway(TM) system entry vector (pDONR201).</title>
        <authorList>
            <person name="Ebert L."/>
            <person name="Schick M."/>
            <person name="Neubert P."/>
            <person name="Schatten R."/>
            <person name="Henze S."/>
            <person name="Korn B."/>
        </authorList>
    </citation>
    <scope>NUCLEOTIDE SEQUENCE [LARGE SCALE MRNA] (ISOFORM 1)</scope>
</reference>
<reference key="5">
    <citation type="submission" date="2005-04" db="EMBL/GenBank/DDBJ databases">
        <authorList>
            <person name="Totoki Y."/>
            <person name="Toyoda A."/>
            <person name="Takeda T."/>
            <person name="Sakaki Y."/>
            <person name="Tanaka A."/>
            <person name="Yokoyama S."/>
        </authorList>
    </citation>
    <scope>NUCLEOTIDE SEQUENCE [LARGE SCALE MRNA] (ISOFORM 1)</scope>
    <source>
        <tissue>Hepatoma</tissue>
    </source>
</reference>
<reference key="6">
    <citation type="journal article" date="2003" name="Nature">
        <title>The DNA sequence of human chromosome 7.</title>
        <authorList>
            <person name="Hillier L.W."/>
            <person name="Fulton R.S."/>
            <person name="Fulton L.A."/>
            <person name="Graves T.A."/>
            <person name="Pepin K.H."/>
            <person name="Wagner-McPherson C."/>
            <person name="Layman D."/>
            <person name="Maas J."/>
            <person name="Jaeger S."/>
            <person name="Walker R."/>
            <person name="Wylie K."/>
            <person name="Sekhon M."/>
            <person name="Becker M.C."/>
            <person name="O'Laughlin M.D."/>
            <person name="Schaller M.E."/>
            <person name="Fewell G.A."/>
            <person name="Delehaunty K.D."/>
            <person name="Miner T.L."/>
            <person name="Nash W.E."/>
            <person name="Cordes M."/>
            <person name="Du H."/>
            <person name="Sun H."/>
            <person name="Edwards J."/>
            <person name="Bradshaw-Cordum H."/>
            <person name="Ali J."/>
            <person name="Andrews S."/>
            <person name="Isak A."/>
            <person name="Vanbrunt A."/>
            <person name="Nguyen C."/>
            <person name="Du F."/>
            <person name="Lamar B."/>
            <person name="Courtney L."/>
            <person name="Kalicki J."/>
            <person name="Ozersky P."/>
            <person name="Bielicki L."/>
            <person name="Scott K."/>
            <person name="Holmes A."/>
            <person name="Harkins R."/>
            <person name="Harris A."/>
            <person name="Strong C.M."/>
            <person name="Hou S."/>
            <person name="Tomlinson C."/>
            <person name="Dauphin-Kohlberg S."/>
            <person name="Kozlowicz-Reilly A."/>
            <person name="Leonard S."/>
            <person name="Rohlfing T."/>
            <person name="Rock S.M."/>
            <person name="Tin-Wollam A.-M."/>
            <person name="Abbott A."/>
            <person name="Minx P."/>
            <person name="Maupin R."/>
            <person name="Strowmatt C."/>
            <person name="Latreille P."/>
            <person name="Miller N."/>
            <person name="Johnson D."/>
            <person name="Murray J."/>
            <person name="Woessner J.P."/>
            <person name="Wendl M.C."/>
            <person name="Yang S.-P."/>
            <person name="Schultz B.R."/>
            <person name="Wallis J.W."/>
            <person name="Spieth J."/>
            <person name="Bieri T.A."/>
            <person name="Nelson J.O."/>
            <person name="Berkowicz N."/>
            <person name="Wohldmann P.E."/>
            <person name="Cook L.L."/>
            <person name="Hickenbotham M.T."/>
            <person name="Eldred J."/>
            <person name="Williams D."/>
            <person name="Bedell J.A."/>
            <person name="Mardis E.R."/>
            <person name="Clifton S.W."/>
            <person name="Chissoe S.L."/>
            <person name="Marra M.A."/>
            <person name="Raymond C."/>
            <person name="Haugen E."/>
            <person name="Gillett W."/>
            <person name="Zhou Y."/>
            <person name="James R."/>
            <person name="Phelps K."/>
            <person name="Iadanoto S."/>
            <person name="Bubb K."/>
            <person name="Simms E."/>
            <person name="Levy R."/>
            <person name="Clendenning J."/>
            <person name="Kaul R."/>
            <person name="Kent W.J."/>
            <person name="Furey T.S."/>
            <person name="Baertsch R.A."/>
            <person name="Brent M.R."/>
            <person name="Keibler E."/>
            <person name="Flicek P."/>
            <person name="Bork P."/>
            <person name="Suyama M."/>
            <person name="Bailey J.A."/>
            <person name="Portnoy M.E."/>
            <person name="Torrents D."/>
            <person name="Chinwalla A.T."/>
            <person name="Gish W.R."/>
            <person name="Eddy S.R."/>
            <person name="McPherson J.D."/>
            <person name="Olson M.V."/>
            <person name="Eichler E.E."/>
            <person name="Green E.D."/>
            <person name="Waterston R.H."/>
            <person name="Wilson R.K."/>
        </authorList>
    </citation>
    <scope>NUCLEOTIDE SEQUENCE [LARGE SCALE GENOMIC DNA]</scope>
</reference>
<reference key="7">
    <citation type="journal article" date="2004" name="Genome Res.">
        <title>The status, quality, and expansion of the NIH full-length cDNA project: the Mammalian Gene Collection (MGC).</title>
        <authorList>
            <consortium name="The MGC Project Team"/>
        </authorList>
    </citation>
    <scope>NUCLEOTIDE SEQUENCE [LARGE SCALE MRNA] (ISOFORM 1)</scope>
    <source>
        <tissue>Lymph</tissue>
    </source>
</reference>
<reference key="8">
    <citation type="journal article" date="2004" name="Biochem. J.">
        <title>The human SNARE protein Ykt6 mediates its own palmitoylation at C-terminal cysteine residues.</title>
        <authorList>
            <person name="Veit M."/>
        </authorList>
    </citation>
    <scope>CATALYTIC ACTIVITY</scope>
    <scope>MUTAGENESIS OF PHE-42; CYS-194 AND CYS-195</scope>
    <scope>PALMITOYLATION AT CYS-194</scope>
</reference>
<reference key="9">
    <citation type="journal article" date="2004" name="Mol. Biol. Cell">
        <title>Countercurrent distribution of two distinct SNARE complexes mediating transport within the Golgi stack.</title>
        <authorList>
            <person name="Volchuk A."/>
            <person name="Ravazzola M."/>
            <person name="Perrelet A."/>
            <person name="Eng W.S."/>
            <person name="Di Liberto M."/>
            <person name="Varlamov O."/>
            <person name="Fukasawa M."/>
            <person name="Engel T."/>
            <person name="Sollner T.H."/>
            <person name="Rothman J.E."/>
            <person name="Orci L."/>
        </authorList>
    </citation>
    <scope>SUBCELLULAR LOCATION</scope>
</reference>
<reference key="10">
    <citation type="journal article" date="2004" name="Mol. Biol. Cell">
        <title>Participation of the syntaxin 5/Ykt6/GS28/GS15 SNARE complex in transport from the early/recycling endosome to the trans-Golgi network.</title>
        <authorList>
            <person name="Tai G."/>
            <person name="Lu L."/>
            <person name="Wang T.L."/>
            <person name="Tang B.L."/>
            <person name="Goud B."/>
            <person name="Johannes L."/>
            <person name="Hong W."/>
        </authorList>
    </citation>
    <scope>FUNCTION</scope>
    <scope>SUBCELLULAR LOCATION</scope>
</reference>
<reference key="11">
    <citation type="journal article" date="2004" name="Proc. Natl. Acad. Sci. U.S.A.">
        <title>Localization and activity of the SNARE Ykt6 determined by its regulatory domain and palmitoylation.</title>
        <authorList>
            <person name="Fukasawa M."/>
            <person name="Varlamov O."/>
            <person name="Eng W.S."/>
            <person name="Soellner T.H."/>
            <person name="Rothman J.E."/>
        </authorList>
    </citation>
    <scope>SUBCELLULAR LOCATION</scope>
    <scope>MUTAGENESIS OF PHE-42; CYS-194 AND CYS-195</scope>
    <scope>ISOPRENYLATION AT CYS-195</scope>
    <scope>PALMITOYLATION</scope>
</reference>
<reference key="12">
    <citation type="journal article" date="2010" name="Sci. Signal.">
        <title>Quantitative phosphoproteomics reveals widespread full phosphorylation site occupancy during mitosis.</title>
        <authorList>
            <person name="Olsen J.V."/>
            <person name="Vermeulen M."/>
            <person name="Santamaria A."/>
            <person name="Kumar C."/>
            <person name="Miller M.L."/>
            <person name="Jensen L.J."/>
            <person name="Gnad F."/>
            <person name="Cox J."/>
            <person name="Jensen T.S."/>
            <person name="Nigg E.A."/>
            <person name="Brunak S."/>
            <person name="Mann M."/>
        </authorList>
    </citation>
    <scope>IDENTIFICATION BY MASS SPECTROMETRY [LARGE SCALE ANALYSIS]</scope>
    <source>
        <tissue>Cervix carcinoma</tissue>
    </source>
</reference>
<reference key="13">
    <citation type="journal article" date="2011" name="BMC Syst. Biol.">
        <title>Initial characterization of the human central proteome.</title>
        <authorList>
            <person name="Burkard T.R."/>
            <person name="Planyavsky M."/>
            <person name="Kaupe I."/>
            <person name="Breitwieser F.P."/>
            <person name="Buerckstuemmer T."/>
            <person name="Bennett K.L."/>
            <person name="Superti-Furga G."/>
            <person name="Colinge J."/>
        </authorList>
    </citation>
    <scope>IDENTIFICATION BY MASS SPECTROMETRY [LARGE SCALE ANALYSIS]</scope>
</reference>
<reference key="14">
    <citation type="journal article" date="2013" name="J. Proteome Res.">
        <title>Toward a comprehensive characterization of a human cancer cell phosphoproteome.</title>
        <authorList>
            <person name="Zhou H."/>
            <person name="Di Palma S."/>
            <person name="Preisinger C."/>
            <person name="Peng M."/>
            <person name="Polat A.N."/>
            <person name="Heck A.J."/>
            <person name="Mohammed S."/>
        </authorList>
    </citation>
    <scope>PHOSPHORYLATION [LARGE SCALE ANALYSIS] AT SER-159</scope>
    <scope>IDENTIFICATION BY MASS SPECTROMETRY [LARGE SCALE ANALYSIS]</scope>
    <source>
        <tissue>Erythroleukemia</tissue>
    </source>
</reference>
<feature type="chain" id="PRO_0000280709" description="Synaptobrevin homolog YKT6">
    <location>
        <begin position="1"/>
        <end position="195"/>
    </location>
</feature>
<feature type="propeptide" id="PRO_0000396661" description="Removed in mature form" evidence="9">
    <location>
        <begin position="196"/>
        <end position="198"/>
    </location>
</feature>
<feature type="domain" description="Longin" evidence="2">
    <location>
        <begin position="8"/>
        <end position="126"/>
    </location>
</feature>
<feature type="domain" description="v-SNARE coiled-coil homology" evidence="3">
    <location>
        <begin position="138"/>
        <end position="198"/>
    </location>
</feature>
<feature type="modified residue" description="Phosphoserine" evidence="10">
    <location>
        <position position="159"/>
    </location>
</feature>
<feature type="modified residue" description="Cysteine methyl ester" evidence="9">
    <location>
        <position position="195"/>
    </location>
</feature>
<feature type="lipid moiety-binding region" description="S-palmitoyl cysteine" evidence="6">
    <location>
        <position position="194"/>
    </location>
</feature>
<feature type="lipid moiety-binding region" description="S-farnesyl cysteine" evidence="4">
    <location>
        <position position="195"/>
    </location>
</feature>
<feature type="splice variant" id="VSP_056071" description="In isoform 2." evidence="8">
    <location>
        <begin position="154"/>
        <end position="187"/>
    </location>
</feature>
<feature type="mutagenesis site" description="Increases palmitoylation. Targeted to Golgi membranes. Targeted to Golgi and cytosol; when associated with S-194. Targeted to cytosol; when associated with S-195." evidence="4 6">
    <original>F</original>
    <variation>E</variation>
    <location>
        <position position="42"/>
    </location>
</feature>
<feature type="mutagenesis site" description="Decreases palmitoylation by 55%. Prevents palmitoylation; when associated with S-195. Targeted to Golgi and cytosol; when associated with E-42." evidence="4 6">
    <original>C</original>
    <variation>S</variation>
    <location>
        <position position="194"/>
    </location>
</feature>
<feature type="mutagenesis site" description="Prevents farnesylation. Targeted to cytosol; when associated with E-42. Decreases palmitoylation by 13%. Prevents palmitoylation; when associated with S-194." evidence="4 6">
    <original>C</original>
    <variation>S</variation>
    <location>
        <position position="195"/>
    </location>
</feature>
<feature type="sequence conflict" description="In Ref. 4; CAG46805." evidence="9" ref="4">
    <original>D</original>
    <variation>N</variation>
    <location>
        <position position="63"/>
    </location>
</feature>
<feature type="sequence conflict" description="In Ref. 5; BAD97208." evidence="9" ref="5">
    <original>P</original>
    <variation>L</variation>
    <location>
        <position position="138"/>
    </location>
</feature>
<feature type="sequence conflict" description="In Ref. 4; CAG33270." evidence="9" ref="4">
    <original>M</original>
    <variation>I</variation>
    <location>
        <position position="198"/>
    </location>
</feature>
<feature type="strand" evidence="12">
    <location>
        <begin position="3"/>
        <end position="11"/>
    </location>
</feature>
<feature type="strand" evidence="12">
    <location>
        <begin position="16"/>
        <end position="20"/>
    </location>
</feature>
<feature type="strand" evidence="11">
    <location>
        <begin position="26"/>
        <end position="28"/>
    </location>
</feature>
<feature type="helix" evidence="12">
    <location>
        <begin position="30"/>
        <end position="32"/>
    </location>
</feature>
<feature type="helix" evidence="12">
    <location>
        <begin position="33"/>
        <end position="50"/>
    </location>
</feature>
<feature type="strand" evidence="12">
    <location>
        <begin position="55"/>
        <end position="61"/>
    </location>
</feature>
<feature type="strand" evidence="12">
    <location>
        <begin position="64"/>
        <end position="70"/>
    </location>
</feature>
<feature type="strand" evidence="12">
    <location>
        <begin position="72"/>
        <end position="81"/>
    </location>
</feature>
<feature type="strand" evidence="12">
    <location>
        <begin position="83"/>
        <end position="85"/>
    </location>
</feature>
<feature type="helix" evidence="12">
    <location>
        <begin position="87"/>
        <end position="104"/>
    </location>
</feature>
<feature type="strand" evidence="12">
    <location>
        <begin position="107"/>
        <end position="110"/>
    </location>
</feature>
<feature type="turn" evidence="12">
    <location>
        <begin position="115"/>
        <end position="117"/>
    </location>
</feature>
<feature type="helix" evidence="12">
    <location>
        <begin position="123"/>
        <end position="129"/>
    </location>
</feature>
<feature type="helix" evidence="12">
    <location>
        <begin position="133"/>
        <end position="135"/>
    </location>
</feature>
<feature type="turn" evidence="12">
    <location>
        <begin position="140"/>
        <end position="144"/>
    </location>
</feature>
<feature type="strand" evidence="12">
    <location>
        <begin position="152"/>
        <end position="156"/>
    </location>
</feature>
<feature type="turn" evidence="12">
    <location>
        <begin position="157"/>
        <end position="160"/>
    </location>
</feature>
<feature type="helix" evidence="12">
    <location>
        <begin position="167"/>
        <end position="173"/>
    </location>
</feature>
<feature type="strand" evidence="12">
    <location>
        <begin position="175"/>
        <end position="177"/>
    </location>
</feature>
<feature type="helix" evidence="12">
    <location>
        <begin position="179"/>
        <end position="186"/>
    </location>
</feature>
<feature type="turn" evidence="12">
    <location>
        <begin position="187"/>
        <end position="191"/>
    </location>
</feature>
<accession>O15498</accession>
<accession>B4DR94</accession>
<accession>Q53F01</accession>
<accession>Q6FGU9</accession>
<accession>Q6IB15</accession>
<protein>
    <recommendedName>
        <fullName>Synaptobrevin homolog YKT6</fullName>
        <ecNumber evidence="6">2.3.1.-</ecNumber>
    </recommendedName>
</protein>
<keyword id="KW-0002">3D-structure</keyword>
<keyword id="KW-0025">Alternative splicing</keyword>
<keyword id="KW-0175">Coiled coil</keyword>
<keyword id="KW-0963">Cytoplasm</keyword>
<keyword id="KW-0968">Cytoplasmic vesicle</keyword>
<keyword id="KW-0931">ER-Golgi transport</keyword>
<keyword id="KW-0333">Golgi apparatus</keyword>
<keyword id="KW-0449">Lipoprotein</keyword>
<keyword id="KW-0472">Membrane</keyword>
<keyword id="KW-0488">Methylation</keyword>
<keyword id="KW-0564">Palmitate</keyword>
<keyword id="KW-0597">Phosphoprotein</keyword>
<keyword id="KW-0636">Prenylation</keyword>
<keyword id="KW-0653">Protein transport</keyword>
<keyword id="KW-1267">Proteomics identification</keyword>
<keyword id="KW-1185">Reference proteome</keyword>
<keyword id="KW-0808">Transferase</keyword>
<keyword id="KW-0813">Transport</keyword>
<gene>
    <name type="primary">YKT6</name>
</gene>
<name>YKT6_HUMAN</name>
<sequence length="198" mass="22418">MKLYSLSVLYKGEAKVVLLKAAYDVSSFSFFQRSSVQEFMTFTSQLIVERSSKGTRASVKEQDYLCHVYVRNDSLAGVVIADNEYPSRVAFTLLEKVLDEFSKQVDRIDWPVGSPATIHYPALDGHLSRYQNPREADPMTKVQAELDETKIILHNTMESLLERGEKLDDLVSKSEVLGTQSKAFYKTARKQNSCCAIM</sequence>
<dbReference type="EC" id="2.3.1.-" evidence="6"/>
<dbReference type="EMBL" id="U95735">
    <property type="protein sequence ID" value="AAB81131.1"/>
    <property type="molecule type" value="mRNA"/>
</dbReference>
<dbReference type="EMBL" id="BT007078">
    <property type="protein sequence ID" value="AAP35741.1"/>
    <property type="molecule type" value="mRNA"/>
</dbReference>
<dbReference type="EMBL" id="AK299158">
    <property type="protein sequence ID" value="BAG61206.1"/>
    <property type="molecule type" value="mRNA"/>
</dbReference>
<dbReference type="EMBL" id="CR456989">
    <property type="protein sequence ID" value="CAG33270.1"/>
    <property type="molecule type" value="mRNA"/>
</dbReference>
<dbReference type="EMBL" id="CR542008">
    <property type="protein sequence ID" value="CAG46805.1"/>
    <property type="molecule type" value="mRNA"/>
</dbReference>
<dbReference type="EMBL" id="AK223488">
    <property type="protein sequence ID" value="BAD97208.1"/>
    <property type="molecule type" value="mRNA"/>
</dbReference>
<dbReference type="EMBL" id="AC006454">
    <property type="status" value="NOT_ANNOTATED_CDS"/>
    <property type="molecule type" value="Genomic_DNA"/>
</dbReference>
<dbReference type="EMBL" id="BC007319">
    <property type="protein sequence ID" value="AAH07319.1"/>
    <property type="molecule type" value="mRNA"/>
</dbReference>
<dbReference type="CCDS" id="CCDS5482.1">
    <molecule id="O15498-1"/>
</dbReference>
<dbReference type="CCDS" id="CCDS87497.1">
    <molecule id="O15498-2"/>
</dbReference>
<dbReference type="RefSeq" id="NP_001350607.1">
    <molecule id="O15498-2"/>
    <property type="nucleotide sequence ID" value="NM_001363678.2"/>
</dbReference>
<dbReference type="RefSeq" id="NP_006546.1">
    <molecule id="O15498-1"/>
    <property type="nucleotide sequence ID" value="NM_006555.4"/>
</dbReference>
<dbReference type="RefSeq" id="XP_016867171.1">
    <property type="nucleotide sequence ID" value="XM_017011682.1"/>
</dbReference>
<dbReference type="PDB" id="6J74">
    <property type="method" value="X-ray"/>
    <property type="resolution" value="3.21 A"/>
    <property type="chains" value="C=1-198"/>
</dbReference>
<dbReference type="PDB" id="6J7F">
    <property type="method" value="X-ray"/>
    <property type="resolution" value="2.88 A"/>
    <property type="chains" value="C=1-195"/>
</dbReference>
<dbReference type="PDB" id="6J7X">
    <property type="method" value="X-ray"/>
    <property type="resolution" value="2.75 A"/>
    <property type="chains" value="C=1-198"/>
</dbReference>
<dbReference type="PDBsum" id="6J74"/>
<dbReference type="PDBsum" id="6J7F"/>
<dbReference type="PDBsum" id="6J7X"/>
<dbReference type="SMR" id="O15498"/>
<dbReference type="BioGRID" id="115895">
    <property type="interactions" value="261"/>
</dbReference>
<dbReference type="ComplexPortal" id="CPX-25786">
    <property type="entry name" value="SNARE priming complex STX17-SNAP29-YKT6"/>
</dbReference>
<dbReference type="FunCoup" id="O15498">
    <property type="interactions" value="3755"/>
</dbReference>
<dbReference type="IntAct" id="O15498">
    <property type="interactions" value="69"/>
</dbReference>
<dbReference type="MINT" id="O15498"/>
<dbReference type="STRING" id="9606.ENSP00000223369"/>
<dbReference type="TCDB" id="1.F.1.3.1">
    <property type="family name" value="the synaptosomal vesicle fusion pore (svf-pore) family"/>
</dbReference>
<dbReference type="iPTMnet" id="O15498"/>
<dbReference type="PhosphoSitePlus" id="O15498"/>
<dbReference type="SwissPalm" id="O15498"/>
<dbReference type="BioMuta" id="YKT6"/>
<dbReference type="jPOST" id="O15498"/>
<dbReference type="MassIVE" id="O15498"/>
<dbReference type="PaxDb" id="9606-ENSP00000223369"/>
<dbReference type="PeptideAtlas" id="O15498"/>
<dbReference type="ProteomicsDB" id="48697">
    <molecule id="O15498-1"/>
</dbReference>
<dbReference type="ProteomicsDB" id="4936"/>
<dbReference type="Pumba" id="O15498"/>
<dbReference type="TopDownProteomics" id="O15498-1">
    <molecule id="O15498-1"/>
</dbReference>
<dbReference type="Antibodypedia" id="27085">
    <property type="antibodies" value="69 antibodies from 18 providers"/>
</dbReference>
<dbReference type="DNASU" id="10652"/>
<dbReference type="Ensembl" id="ENST00000223369.3">
    <molecule id="O15498-1"/>
    <property type="protein sequence ID" value="ENSP00000223369.2"/>
    <property type="gene ID" value="ENSG00000106636.9"/>
</dbReference>
<dbReference type="Ensembl" id="ENST00000496112.5">
    <molecule id="O15498-2"/>
    <property type="protein sequence ID" value="ENSP00000420805.1"/>
    <property type="gene ID" value="ENSG00000106636.9"/>
</dbReference>
<dbReference type="Ensembl" id="ENST00000679020.1">
    <molecule id="O15498-1"/>
    <property type="protein sequence ID" value="ENSP00000504623.1"/>
    <property type="gene ID" value="ENSG00000106636.9"/>
</dbReference>
<dbReference type="GeneID" id="10652"/>
<dbReference type="KEGG" id="hsa:10652"/>
<dbReference type="MANE-Select" id="ENST00000223369.3">
    <property type="protein sequence ID" value="ENSP00000223369.2"/>
    <property type="RefSeq nucleotide sequence ID" value="NM_006555.4"/>
    <property type="RefSeq protein sequence ID" value="NP_006546.1"/>
</dbReference>
<dbReference type="UCSC" id="uc003tkm.4">
    <molecule id="O15498-1"/>
    <property type="organism name" value="human"/>
</dbReference>
<dbReference type="AGR" id="HGNC:16959"/>
<dbReference type="CTD" id="10652"/>
<dbReference type="DisGeNET" id="10652"/>
<dbReference type="GeneCards" id="YKT6"/>
<dbReference type="HGNC" id="HGNC:16959">
    <property type="gene designation" value="YKT6"/>
</dbReference>
<dbReference type="HPA" id="ENSG00000106636">
    <property type="expression patterns" value="Low tissue specificity"/>
</dbReference>
<dbReference type="MIM" id="606209">
    <property type="type" value="gene"/>
</dbReference>
<dbReference type="neXtProt" id="NX_O15498"/>
<dbReference type="OpenTargets" id="ENSG00000106636"/>
<dbReference type="PharmGKB" id="PA145007308"/>
<dbReference type="VEuPathDB" id="HostDB:ENSG00000106636"/>
<dbReference type="eggNOG" id="KOG0861">
    <property type="taxonomic scope" value="Eukaryota"/>
</dbReference>
<dbReference type="GeneTree" id="ENSGT00390000015164"/>
<dbReference type="HOGENOM" id="CLU_074848_3_0_1"/>
<dbReference type="InParanoid" id="O15498"/>
<dbReference type="OMA" id="HYIGIIR"/>
<dbReference type="OrthoDB" id="27923at2759"/>
<dbReference type="PAN-GO" id="O15498">
    <property type="GO annotations" value="3 GO annotations based on evolutionary models"/>
</dbReference>
<dbReference type="PhylomeDB" id="O15498"/>
<dbReference type="TreeFam" id="TF105606"/>
<dbReference type="PathwayCommons" id="O15498"/>
<dbReference type="Reactome" id="R-HSA-204005">
    <property type="pathway name" value="COPII-mediated vesicle transport"/>
</dbReference>
<dbReference type="Reactome" id="R-HSA-6807878">
    <property type="pathway name" value="COPI-mediated anterograde transport"/>
</dbReference>
<dbReference type="Reactome" id="R-HSA-6811438">
    <property type="pathway name" value="Intra-Golgi traffic"/>
</dbReference>
<dbReference type="Reactome" id="R-HSA-8980692">
    <property type="pathway name" value="RHOA GTPase cycle"/>
</dbReference>
<dbReference type="Reactome" id="R-HSA-9013148">
    <property type="pathway name" value="CDC42 GTPase cycle"/>
</dbReference>
<dbReference type="Reactome" id="R-HSA-9013149">
    <property type="pathway name" value="RAC1 GTPase cycle"/>
</dbReference>
<dbReference type="Reactome" id="R-HSA-9013408">
    <property type="pathway name" value="RHOG GTPase cycle"/>
</dbReference>
<dbReference type="Reactome" id="R-HSA-9013423">
    <property type="pathway name" value="RAC3 GTPase cycle"/>
</dbReference>
<dbReference type="SignaLink" id="O15498"/>
<dbReference type="BioGRID-ORCS" id="10652">
    <property type="hits" value="784 hits in 1162 CRISPR screens"/>
</dbReference>
<dbReference type="ChiTaRS" id="YKT6">
    <property type="organism name" value="human"/>
</dbReference>
<dbReference type="GeneWiki" id="YKT6"/>
<dbReference type="GenomeRNAi" id="10652"/>
<dbReference type="Pharos" id="O15498">
    <property type="development level" value="Tbio"/>
</dbReference>
<dbReference type="PRO" id="PR:O15498"/>
<dbReference type="Proteomes" id="UP000005640">
    <property type="component" value="Chromosome 7"/>
</dbReference>
<dbReference type="RNAct" id="O15498">
    <property type="molecule type" value="protein"/>
</dbReference>
<dbReference type="Bgee" id="ENSG00000106636">
    <property type="expression patterns" value="Expressed in stromal cell of endometrium and 191 other cell types or tissues"/>
</dbReference>
<dbReference type="ExpressionAtlas" id="O15498">
    <property type="expression patterns" value="baseline and differential"/>
</dbReference>
<dbReference type="GO" id="GO:0097440">
    <property type="term" value="C:apical dendrite"/>
    <property type="evidence" value="ECO:0007669"/>
    <property type="project" value="Ensembl"/>
</dbReference>
<dbReference type="GO" id="GO:0097441">
    <property type="term" value="C:basal dendrite"/>
    <property type="evidence" value="ECO:0007669"/>
    <property type="project" value="Ensembl"/>
</dbReference>
<dbReference type="GO" id="GO:0005737">
    <property type="term" value="C:cytoplasm"/>
    <property type="evidence" value="ECO:0000314"/>
    <property type="project" value="BHF-UCL"/>
</dbReference>
<dbReference type="GO" id="GO:0030659">
    <property type="term" value="C:cytoplasmic vesicle membrane"/>
    <property type="evidence" value="ECO:0007669"/>
    <property type="project" value="UniProtKB-SubCell"/>
</dbReference>
<dbReference type="GO" id="GO:0005829">
    <property type="term" value="C:cytosol"/>
    <property type="evidence" value="ECO:0000314"/>
    <property type="project" value="HPA"/>
</dbReference>
<dbReference type="GO" id="GO:0005783">
    <property type="term" value="C:endoplasmic reticulum"/>
    <property type="evidence" value="ECO:0000314"/>
    <property type="project" value="HGNC-UCL"/>
</dbReference>
<dbReference type="GO" id="GO:0033116">
    <property type="term" value="C:endoplasmic reticulum-Golgi intermediate compartment membrane"/>
    <property type="evidence" value="ECO:0000304"/>
    <property type="project" value="Reactome"/>
</dbReference>
<dbReference type="GO" id="GO:0005768">
    <property type="term" value="C:endosome"/>
    <property type="evidence" value="ECO:0000314"/>
    <property type="project" value="HGNC-UCL"/>
</dbReference>
<dbReference type="GO" id="GO:0005794">
    <property type="term" value="C:Golgi apparatus"/>
    <property type="evidence" value="ECO:0000314"/>
    <property type="project" value="HGNC-UCL"/>
</dbReference>
<dbReference type="GO" id="GO:0000139">
    <property type="term" value="C:Golgi membrane"/>
    <property type="evidence" value="ECO:0000304"/>
    <property type="project" value="Reactome"/>
</dbReference>
<dbReference type="GO" id="GO:0005739">
    <property type="term" value="C:mitochondrion"/>
    <property type="evidence" value="ECO:0000314"/>
    <property type="project" value="HPA"/>
</dbReference>
<dbReference type="GO" id="GO:0043025">
    <property type="term" value="C:neuronal cell body"/>
    <property type="evidence" value="ECO:0007669"/>
    <property type="project" value="Ensembl"/>
</dbReference>
<dbReference type="GO" id="GO:0005886">
    <property type="term" value="C:plasma membrane"/>
    <property type="evidence" value="ECO:0000314"/>
    <property type="project" value="HGNC-UCL"/>
</dbReference>
<dbReference type="GO" id="GO:0031201">
    <property type="term" value="C:SNARE complex"/>
    <property type="evidence" value="ECO:0000250"/>
    <property type="project" value="HGNC-UCL"/>
</dbReference>
<dbReference type="GO" id="GO:0030133">
    <property type="term" value="C:transport vesicle"/>
    <property type="evidence" value="ECO:0000304"/>
    <property type="project" value="Reactome"/>
</dbReference>
<dbReference type="GO" id="GO:0045296">
    <property type="term" value="F:cadherin binding"/>
    <property type="evidence" value="ECO:0007005"/>
    <property type="project" value="BHF-UCL"/>
</dbReference>
<dbReference type="GO" id="GO:0019706">
    <property type="term" value="F:protein-cysteine S-palmitoyltransferase activity"/>
    <property type="evidence" value="ECO:0000314"/>
    <property type="project" value="HGNC-UCL"/>
</dbReference>
<dbReference type="GO" id="GO:0005484">
    <property type="term" value="F:SNAP receptor activity"/>
    <property type="evidence" value="ECO:0000314"/>
    <property type="project" value="HGNC-UCL"/>
</dbReference>
<dbReference type="GO" id="GO:0006888">
    <property type="term" value="P:endoplasmic reticulum to Golgi vesicle-mediated transport"/>
    <property type="evidence" value="ECO:0000314"/>
    <property type="project" value="HGNC-UCL"/>
</dbReference>
<dbReference type="GO" id="GO:0015031">
    <property type="term" value="P:protein transport"/>
    <property type="evidence" value="ECO:0007669"/>
    <property type="project" value="UniProtKB-KW"/>
</dbReference>
<dbReference type="GO" id="GO:0042147">
    <property type="term" value="P:retrograde transport, endosome to Golgi"/>
    <property type="evidence" value="ECO:0000314"/>
    <property type="project" value="HGNC-UCL"/>
</dbReference>
<dbReference type="GO" id="GO:0006904">
    <property type="term" value="P:vesicle docking involved in exocytosis"/>
    <property type="evidence" value="ECO:0000314"/>
    <property type="project" value="HGNC-UCL"/>
</dbReference>
<dbReference type="GO" id="GO:0006903">
    <property type="term" value="P:vesicle targeting"/>
    <property type="evidence" value="ECO:0000314"/>
    <property type="project" value="HGNC-UCL"/>
</dbReference>
<dbReference type="CDD" id="cd14824">
    <property type="entry name" value="Longin"/>
    <property type="match status" value="1"/>
</dbReference>
<dbReference type="CDD" id="cd15867">
    <property type="entry name" value="R-SNARE_YKT6"/>
    <property type="match status" value="1"/>
</dbReference>
<dbReference type="FunFam" id="3.30.450.50:FF:000013">
    <property type="entry name" value="Synaptobrevin homolog YKT6"/>
    <property type="match status" value="1"/>
</dbReference>
<dbReference type="FunFam" id="1.20.5.110:FF:000020">
    <property type="entry name" value="synaptobrevin homolog YKT6"/>
    <property type="match status" value="1"/>
</dbReference>
<dbReference type="Gene3D" id="1.20.5.110">
    <property type="match status" value="1"/>
</dbReference>
<dbReference type="Gene3D" id="3.30.450.50">
    <property type="entry name" value="Longin domain"/>
    <property type="match status" value="1"/>
</dbReference>
<dbReference type="InterPro" id="IPR011012">
    <property type="entry name" value="Longin-like_dom_sf"/>
</dbReference>
<dbReference type="InterPro" id="IPR010908">
    <property type="entry name" value="Longin_dom"/>
</dbReference>
<dbReference type="InterPro" id="IPR045848">
    <property type="entry name" value="R-SNARE_YKT6"/>
</dbReference>
<dbReference type="InterPro" id="IPR042855">
    <property type="entry name" value="V_SNARE_CC"/>
</dbReference>
<dbReference type="PANTHER" id="PTHR45806">
    <property type="entry name" value="SYNAPTOBREVIN HOMOLOG YKT6"/>
    <property type="match status" value="1"/>
</dbReference>
<dbReference type="PANTHER" id="PTHR45806:SF1">
    <property type="entry name" value="SYNAPTOBREVIN HOMOLOG YKT6"/>
    <property type="match status" value="1"/>
</dbReference>
<dbReference type="Pfam" id="PF13774">
    <property type="entry name" value="Longin"/>
    <property type="match status" value="1"/>
</dbReference>
<dbReference type="Pfam" id="PF00957">
    <property type="entry name" value="Synaptobrevin"/>
    <property type="match status" value="1"/>
</dbReference>
<dbReference type="SMART" id="SM01270">
    <property type="entry name" value="Longin"/>
    <property type="match status" value="1"/>
</dbReference>
<dbReference type="SUPFAM" id="SSF58038">
    <property type="entry name" value="SNARE fusion complex"/>
    <property type="match status" value="1"/>
</dbReference>
<dbReference type="SUPFAM" id="SSF64356">
    <property type="entry name" value="SNARE-like"/>
    <property type="match status" value="1"/>
</dbReference>
<dbReference type="PROSITE" id="PS50859">
    <property type="entry name" value="LONGIN"/>
    <property type="match status" value="1"/>
</dbReference>
<dbReference type="PROSITE" id="PS50892">
    <property type="entry name" value="V_SNARE"/>
    <property type="match status" value="1"/>
</dbReference>
<evidence type="ECO:0000250" key="1">
    <source>
        <dbReference type="UniProtKB" id="Q5EGY4"/>
    </source>
</evidence>
<evidence type="ECO:0000255" key="2">
    <source>
        <dbReference type="PROSITE-ProRule" id="PRU00231"/>
    </source>
</evidence>
<evidence type="ECO:0000255" key="3">
    <source>
        <dbReference type="PROSITE-ProRule" id="PRU00290"/>
    </source>
</evidence>
<evidence type="ECO:0000269" key="4">
    <source>
    </source>
</evidence>
<evidence type="ECO:0000269" key="5">
    <source>
    </source>
</evidence>
<evidence type="ECO:0000269" key="6">
    <source>
    </source>
</evidence>
<evidence type="ECO:0000269" key="7">
    <source>
    </source>
</evidence>
<evidence type="ECO:0000303" key="8">
    <source>
    </source>
</evidence>
<evidence type="ECO:0000305" key="9"/>
<evidence type="ECO:0007744" key="10">
    <source>
    </source>
</evidence>
<evidence type="ECO:0007829" key="11">
    <source>
        <dbReference type="PDB" id="6J74"/>
    </source>
</evidence>
<evidence type="ECO:0007829" key="12">
    <source>
        <dbReference type="PDB" id="6J7X"/>
    </source>
</evidence>